<dbReference type="EMBL" id="U18997">
    <property type="protein sequence ID" value="AAA57954.1"/>
    <property type="molecule type" value="Genomic_DNA"/>
</dbReference>
<dbReference type="EMBL" id="U00096">
    <property type="protein sequence ID" value="AAC76185.1"/>
    <property type="molecule type" value="Genomic_DNA"/>
</dbReference>
<dbReference type="EMBL" id="AP009048">
    <property type="protein sequence ID" value="BAE77197.1"/>
    <property type="molecule type" value="Genomic_DNA"/>
</dbReference>
<dbReference type="PIR" id="C65105">
    <property type="entry name" value="C65105"/>
</dbReference>
<dbReference type="RefSeq" id="NP_417620.1">
    <property type="nucleotide sequence ID" value="NC_000913.3"/>
</dbReference>
<dbReference type="RefSeq" id="WP_000147574.1">
    <property type="nucleotide sequence ID" value="NZ_LN832404.1"/>
</dbReference>
<dbReference type="BioGRID" id="4259268">
    <property type="interactions" value="11"/>
</dbReference>
<dbReference type="DIP" id="DIP-12901N"/>
<dbReference type="FunCoup" id="P45468">
    <property type="interactions" value="222"/>
</dbReference>
<dbReference type="IntAct" id="P45468">
    <property type="interactions" value="1"/>
</dbReference>
<dbReference type="STRING" id="511145.b3151"/>
<dbReference type="jPOST" id="P45468"/>
<dbReference type="PaxDb" id="511145-b3151"/>
<dbReference type="EnsemblBacteria" id="AAC76185">
    <property type="protein sequence ID" value="AAC76185"/>
    <property type="gene ID" value="b3151"/>
</dbReference>
<dbReference type="GeneID" id="947668"/>
<dbReference type="KEGG" id="ecj:JW3120"/>
<dbReference type="KEGG" id="eco:b3151"/>
<dbReference type="KEGG" id="ecoc:C3026_17165"/>
<dbReference type="PATRIC" id="fig|1411691.4.peg.3579"/>
<dbReference type="EchoBASE" id="EB2635"/>
<dbReference type="eggNOG" id="COG0701">
    <property type="taxonomic scope" value="Bacteria"/>
</dbReference>
<dbReference type="HOGENOM" id="CLU_063039_0_0_6"/>
<dbReference type="InParanoid" id="P45468"/>
<dbReference type="OMA" id="VPMYADI"/>
<dbReference type="OrthoDB" id="8771795at2"/>
<dbReference type="PhylomeDB" id="P45468"/>
<dbReference type="BioCyc" id="EcoCyc:G7645-MONOMER"/>
<dbReference type="PRO" id="PR:P45468"/>
<dbReference type="Proteomes" id="UP000000625">
    <property type="component" value="Chromosome"/>
</dbReference>
<dbReference type="GO" id="GO:0005886">
    <property type="term" value="C:plasma membrane"/>
    <property type="evidence" value="ECO:0000314"/>
    <property type="project" value="EcoCyc"/>
</dbReference>
<dbReference type="InterPro" id="IPR005524">
    <property type="entry name" value="DUF318"/>
</dbReference>
<dbReference type="PANTHER" id="PTHR43299">
    <property type="entry name" value="UPF0718 PROTEIN YRAQ"/>
    <property type="match status" value="1"/>
</dbReference>
<dbReference type="PANTHER" id="PTHR43299:SF1">
    <property type="entry name" value="UPF0718 PROTEIN YRAQ"/>
    <property type="match status" value="1"/>
</dbReference>
<dbReference type="Pfam" id="PF03773">
    <property type="entry name" value="ArsP_1"/>
    <property type="match status" value="1"/>
</dbReference>
<feature type="chain" id="PRO_0000169454" description="UPF0718 protein YraQ">
    <location>
        <begin position="1"/>
        <end position="346"/>
    </location>
</feature>
<feature type="transmembrane region" description="Helical" evidence="1">
    <location>
        <begin position="12"/>
        <end position="32"/>
    </location>
</feature>
<feature type="transmembrane region" description="Helical" evidence="1">
    <location>
        <begin position="71"/>
        <end position="91"/>
    </location>
</feature>
<feature type="transmembrane region" description="Helical" evidence="1">
    <location>
        <begin position="113"/>
        <end position="133"/>
    </location>
</feature>
<feature type="transmembrane region" description="Helical" evidence="1">
    <location>
        <begin position="146"/>
        <end position="166"/>
    </location>
</feature>
<feature type="transmembrane region" description="Helical" evidence="1">
    <location>
        <begin position="167"/>
        <end position="187"/>
    </location>
</feature>
<feature type="transmembrane region" description="Helical" evidence="1">
    <location>
        <begin position="223"/>
        <end position="243"/>
    </location>
</feature>
<feature type="transmembrane region" description="Helical" evidence="1">
    <location>
        <begin position="260"/>
        <end position="280"/>
    </location>
</feature>
<feature type="transmembrane region" description="Helical" evidence="1">
    <location>
        <begin position="296"/>
        <end position="316"/>
    </location>
</feature>
<feature type="transmembrane region" description="Helical" evidence="1">
    <location>
        <begin position="326"/>
        <end position="346"/>
    </location>
</feature>
<accession>P45468</accession>
<accession>Q2M959</accession>
<sequence length="346" mass="37257">MTGQSSSQAATPIQWWKPALFFLVVIAGLWYVKWEPYYGKAFTAAETHSIGKSILAQADANPWQAALDYAMIYFLAVWKAAVLGVILGSLIQVLIPRDWLLRTLGQSRFRGTLLGTLFSLPGMMCTCCAAPVAAGMRRQQVSMGGALAFWMGNPVLNPATLVFMGFVLGWGFAAIRLVAGLVMVLLIATLVQKWVRETPQTQAPVEIDIPEAQGGFFSRWGRALWTLFWSTIPVYILAVLVLGAARVWLFPHADGAVDNSLMWVVAMAVAGCLFVIPTAAEIPIVQTMMLAGMGTAPALALLMTLPAVSLPSLIMLRKAFPAKALWLTGAMVAVSGVIVGGLALLF</sequence>
<gene>
    <name type="primary">yraQ</name>
    <name type="ordered locus">b3151</name>
    <name type="ordered locus">JW3120</name>
</gene>
<evidence type="ECO:0000255" key="1"/>
<evidence type="ECO:0000305" key="2"/>
<organism>
    <name type="scientific">Escherichia coli (strain K12)</name>
    <dbReference type="NCBI Taxonomy" id="83333"/>
    <lineage>
        <taxon>Bacteria</taxon>
        <taxon>Pseudomonadati</taxon>
        <taxon>Pseudomonadota</taxon>
        <taxon>Gammaproteobacteria</taxon>
        <taxon>Enterobacterales</taxon>
        <taxon>Enterobacteriaceae</taxon>
        <taxon>Escherichia</taxon>
    </lineage>
</organism>
<reference key="1">
    <citation type="journal article" date="1997" name="Science">
        <title>The complete genome sequence of Escherichia coli K-12.</title>
        <authorList>
            <person name="Blattner F.R."/>
            <person name="Plunkett G. III"/>
            <person name="Bloch C.A."/>
            <person name="Perna N.T."/>
            <person name="Burland V."/>
            <person name="Riley M."/>
            <person name="Collado-Vides J."/>
            <person name="Glasner J.D."/>
            <person name="Rode C.K."/>
            <person name="Mayhew G.F."/>
            <person name="Gregor J."/>
            <person name="Davis N.W."/>
            <person name="Kirkpatrick H.A."/>
            <person name="Goeden M.A."/>
            <person name="Rose D.J."/>
            <person name="Mau B."/>
            <person name="Shao Y."/>
        </authorList>
    </citation>
    <scope>NUCLEOTIDE SEQUENCE [LARGE SCALE GENOMIC DNA]</scope>
    <source>
        <strain>K12 / MG1655 / ATCC 47076</strain>
    </source>
</reference>
<reference key="2">
    <citation type="journal article" date="2006" name="Mol. Syst. Biol.">
        <title>Highly accurate genome sequences of Escherichia coli K-12 strains MG1655 and W3110.</title>
        <authorList>
            <person name="Hayashi K."/>
            <person name="Morooka N."/>
            <person name="Yamamoto Y."/>
            <person name="Fujita K."/>
            <person name="Isono K."/>
            <person name="Choi S."/>
            <person name="Ohtsubo E."/>
            <person name="Baba T."/>
            <person name="Wanner B.L."/>
            <person name="Mori H."/>
            <person name="Horiuchi T."/>
        </authorList>
    </citation>
    <scope>NUCLEOTIDE SEQUENCE [LARGE SCALE GENOMIC DNA]</scope>
    <source>
        <strain>K12 / W3110 / ATCC 27325 / DSM 5911</strain>
    </source>
</reference>
<proteinExistence type="inferred from homology"/>
<protein>
    <recommendedName>
        <fullName>UPF0718 protein YraQ</fullName>
    </recommendedName>
</protein>
<comment type="subcellular location">
    <subcellularLocation>
        <location evidence="2">Cell membrane</location>
        <topology evidence="2">Multi-pass membrane protein</topology>
    </subcellularLocation>
</comment>
<comment type="similarity">
    <text evidence="2">Belongs to the UPF0718 family.</text>
</comment>
<name>YRAQ_ECOLI</name>
<keyword id="KW-1003">Cell membrane</keyword>
<keyword id="KW-0472">Membrane</keyword>
<keyword id="KW-1185">Reference proteome</keyword>
<keyword id="KW-0812">Transmembrane</keyword>
<keyword id="KW-1133">Transmembrane helix</keyword>